<name>RS5_STAAB</name>
<accession>Q2YYL4</accession>
<protein>
    <recommendedName>
        <fullName evidence="1">Small ribosomal subunit protein uS5</fullName>
    </recommendedName>
    <alternativeName>
        <fullName evidence="2">30S ribosomal protein S5</fullName>
    </alternativeName>
</protein>
<proteinExistence type="evidence at protein level"/>
<evidence type="ECO:0000255" key="1">
    <source>
        <dbReference type="HAMAP-Rule" id="MF_01307"/>
    </source>
</evidence>
<evidence type="ECO:0000305" key="2"/>
<organism>
    <name type="scientific">Staphylococcus aureus (strain bovine RF122 / ET3-1)</name>
    <dbReference type="NCBI Taxonomy" id="273036"/>
    <lineage>
        <taxon>Bacteria</taxon>
        <taxon>Bacillati</taxon>
        <taxon>Bacillota</taxon>
        <taxon>Bacilli</taxon>
        <taxon>Bacillales</taxon>
        <taxon>Staphylococcaceae</taxon>
        <taxon>Staphylococcus</taxon>
    </lineage>
</organism>
<reference key="1">
    <citation type="journal article" date="2007" name="PLoS ONE">
        <title>Molecular correlates of host specialization in Staphylococcus aureus.</title>
        <authorList>
            <person name="Herron-Olson L."/>
            <person name="Fitzgerald J.R."/>
            <person name="Musser J.M."/>
            <person name="Kapur V."/>
        </authorList>
    </citation>
    <scope>NUCLEOTIDE SEQUENCE [LARGE SCALE GENOMIC DNA]</scope>
    <source>
        <strain>bovine RF122 / ET3-1</strain>
    </source>
</reference>
<sequence>MARREEETKEFEERVVTINRVAKVVKGGRRFRFTALVVVGDKNGRVGFGTGKAQEVPEAIKKAVEAAKKDLVVVPRVEGTTPHTITGRYGSGSVFMKPAAPGTGVIAGGPVRAVLELAGITDILSKSLGSNTPINMVRATIDGLQNLKNAEDVAKLRGKTVEELYN</sequence>
<gene>
    <name evidence="1" type="primary">rpsE</name>
    <name type="ordered locus">SAB2105c</name>
</gene>
<feature type="chain" id="PRO_0000230371" description="Small ribosomal subunit protein uS5">
    <location>
        <begin position="1"/>
        <end position="166"/>
    </location>
</feature>
<feature type="domain" description="S5 DRBM" evidence="1">
    <location>
        <begin position="11"/>
        <end position="74"/>
    </location>
</feature>
<dbReference type="EMBL" id="AJ938182">
    <property type="protein sequence ID" value="CAI81794.1"/>
    <property type="molecule type" value="Genomic_DNA"/>
</dbReference>
<dbReference type="RefSeq" id="WP_000113851.1">
    <property type="nucleotide sequence ID" value="NC_007622.1"/>
</dbReference>
<dbReference type="PDB" id="6FXC">
    <property type="method" value="EM"/>
    <property type="resolution" value="6.76 A"/>
    <property type="chains" value="Ae/Be=10-165"/>
</dbReference>
<dbReference type="PDBsum" id="6FXC"/>
<dbReference type="EMDB" id="EMD-3637"/>
<dbReference type="SMR" id="Q2YYL4"/>
<dbReference type="KEGG" id="sab:SAB2105c"/>
<dbReference type="HOGENOM" id="CLU_065898_2_2_9"/>
<dbReference type="GO" id="GO:0015935">
    <property type="term" value="C:small ribosomal subunit"/>
    <property type="evidence" value="ECO:0007669"/>
    <property type="project" value="InterPro"/>
</dbReference>
<dbReference type="GO" id="GO:0019843">
    <property type="term" value="F:rRNA binding"/>
    <property type="evidence" value="ECO:0007669"/>
    <property type="project" value="UniProtKB-UniRule"/>
</dbReference>
<dbReference type="GO" id="GO:0003735">
    <property type="term" value="F:structural constituent of ribosome"/>
    <property type="evidence" value="ECO:0007669"/>
    <property type="project" value="InterPro"/>
</dbReference>
<dbReference type="GO" id="GO:0006412">
    <property type="term" value="P:translation"/>
    <property type="evidence" value="ECO:0007669"/>
    <property type="project" value="UniProtKB-UniRule"/>
</dbReference>
<dbReference type="FunFam" id="3.30.160.20:FF:000001">
    <property type="entry name" value="30S ribosomal protein S5"/>
    <property type="match status" value="1"/>
</dbReference>
<dbReference type="FunFam" id="3.30.230.10:FF:000002">
    <property type="entry name" value="30S ribosomal protein S5"/>
    <property type="match status" value="1"/>
</dbReference>
<dbReference type="Gene3D" id="3.30.160.20">
    <property type="match status" value="1"/>
</dbReference>
<dbReference type="Gene3D" id="3.30.230.10">
    <property type="match status" value="1"/>
</dbReference>
<dbReference type="HAMAP" id="MF_01307_B">
    <property type="entry name" value="Ribosomal_uS5_B"/>
    <property type="match status" value="1"/>
</dbReference>
<dbReference type="InterPro" id="IPR020568">
    <property type="entry name" value="Ribosomal_Su5_D2-typ_SF"/>
</dbReference>
<dbReference type="InterPro" id="IPR000851">
    <property type="entry name" value="Ribosomal_uS5"/>
</dbReference>
<dbReference type="InterPro" id="IPR005712">
    <property type="entry name" value="Ribosomal_uS5_bac-type"/>
</dbReference>
<dbReference type="InterPro" id="IPR005324">
    <property type="entry name" value="Ribosomal_uS5_C"/>
</dbReference>
<dbReference type="InterPro" id="IPR013810">
    <property type="entry name" value="Ribosomal_uS5_N"/>
</dbReference>
<dbReference type="InterPro" id="IPR018192">
    <property type="entry name" value="Ribosomal_uS5_N_CS"/>
</dbReference>
<dbReference type="InterPro" id="IPR014721">
    <property type="entry name" value="Ribsml_uS5_D2-typ_fold_subgr"/>
</dbReference>
<dbReference type="NCBIfam" id="TIGR01021">
    <property type="entry name" value="rpsE_bact"/>
    <property type="match status" value="1"/>
</dbReference>
<dbReference type="PANTHER" id="PTHR48277">
    <property type="entry name" value="MITOCHONDRIAL RIBOSOMAL PROTEIN S5"/>
    <property type="match status" value="1"/>
</dbReference>
<dbReference type="PANTHER" id="PTHR48277:SF1">
    <property type="entry name" value="MITOCHONDRIAL RIBOSOMAL PROTEIN S5"/>
    <property type="match status" value="1"/>
</dbReference>
<dbReference type="Pfam" id="PF00333">
    <property type="entry name" value="Ribosomal_S5"/>
    <property type="match status" value="1"/>
</dbReference>
<dbReference type="Pfam" id="PF03719">
    <property type="entry name" value="Ribosomal_S5_C"/>
    <property type="match status" value="1"/>
</dbReference>
<dbReference type="SUPFAM" id="SSF54768">
    <property type="entry name" value="dsRNA-binding domain-like"/>
    <property type="match status" value="1"/>
</dbReference>
<dbReference type="SUPFAM" id="SSF54211">
    <property type="entry name" value="Ribosomal protein S5 domain 2-like"/>
    <property type="match status" value="1"/>
</dbReference>
<dbReference type="PROSITE" id="PS00585">
    <property type="entry name" value="RIBOSOMAL_S5"/>
    <property type="match status" value="1"/>
</dbReference>
<dbReference type="PROSITE" id="PS50881">
    <property type="entry name" value="S5_DSRBD"/>
    <property type="match status" value="1"/>
</dbReference>
<keyword id="KW-0002">3D-structure</keyword>
<keyword id="KW-0687">Ribonucleoprotein</keyword>
<keyword id="KW-0689">Ribosomal protein</keyword>
<keyword id="KW-0694">RNA-binding</keyword>
<keyword id="KW-0699">rRNA-binding</keyword>
<comment type="function">
    <text evidence="1">With S4 and S12 plays an important role in translational accuracy.</text>
</comment>
<comment type="function">
    <text evidence="1">Located at the back of the 30S subunit body where it stabilizes the conformation of the head with respect to the body.</text>
</comment>
<comment type="subunit">
    <text evidence="1">Part of the 30S ribosomal subunit. Contacts proteins S4 and S8.</text>
</comment>
<comment type="domain">
    <text>The N-terminal domain interacts with the head of the 30S subunit; the C-terminal domain interacts with the body and contacts protein S4. The interaction surface between S4 and S5 is involved in control of translational fidelity.</text>
</comment>
<comment type="similarity">
    <text evidence="1">Belongs to the universal ribosomal protein uS5 family.</text>
</comment>